<keyword id="KW-0008">Acetylcholine receptor inhibiting toxin</keyword>
<keyword id="KW-0903">Direct protein sequencing</keyword>
<keyword id="KW-1015">Disulfide bond</keyword>
<keyword id="KW-0872">Ion channel impairing toxin</keyword>
<keyword id="KW-0528">Neurotoxin</keyword>
<keyword id="KW-0629">Postsynaptic neurotoxin</keyword>
<keyword id="KW-0964">Secreted</keyword>
<keyword id="KW-0800">Toxin</keyword>
<organism>
    <name type="scientific">Oxyuranus scutellatus scutellatus</name>
    <name type="common">Australian taipan</name>
    <name type="synonym">Coastal taipan</name>
    <dbReference type="NCBI Taxonomy" id="8667"/>
    <lineage>
        <taxon>Eukaryota</taxon>
        <taxon>Metazoa</taxon>
        <taxon>Chordata</taxon>
        <taxon>Craniata</taxon>
        <taxon>Vertebrata</taxon>
        <taxon>Euteleostomi</taxon>
        <taxon>Lepidosauria</taxon>
        <taxon>Squamata</taxon>
        <taxon>Bifurcata</taxon>
        <taxon>Unidentata</taxon>
        <taxon>Episquamata</taxon>
        <taxon>Toxicofera</taxon>
        <taxon>Serpentes</taxon>
        <taxon>Colubroidea</taxon>
        <taxon>Elapidae</taxon>
        <taxon>Hydrophiinae</taxon>
        <taxon>Oxyuranus</taxon>
    </lineage>
</organism>
<comment type="function">
    <text evidence="3">Binds to muscle nicotinic acetylcholine receptor (nAChR) and inhibit acetylcholine from binding to the receptor, thereby impairing neuromuscular transmission.</text>
</comment>
<comment type="subcellular location">
    <subcellularLocation>
        <location evidence="3">Secreted</location>
    </subcellularLocation>
</comment>
<comment type="tissue specificity">
    <text evidence="4">Expressed by the venom gland.</text>
</comment>
<comment type="mass spectrometry" mass="6781.0" method="Electrospray" evidence="3"/>
<comment type="toxic dose">
    <text evidence="3">LD(50) is 63 ug/kg by intraperitoneal injection into mice.</text>
</comment>
<comment type="similarity">
    <text evidence="4">Belongs to the three-finger toxin family. Short-chain subfamily. Type I alpha-neurotoxin sub-subfamily.</text>
</comment>
<dbReference type="SMR" id="P0CB06"/>
<dbReference type="GO" id="GO:0005576">
    <property type="term" value="C:extracellular region"/>
    <property type="evidence" value="ECO:0007669"/>
    <property type="project" value="UniProtKB-SubCell"/>
</dbReference>
<dbReference type="GO" id="GO:0030550">
    <property type="term" value="F:acetylcholine receptor inhibitor activity"/>
    <property type="evidence" value="ECO:0007669"/>
    <property type="project" value="UniProtKB-KW"/>
</dbReference>
<dbReference type="GO" id="GO:0099106">
    <property type="term" value="F:ion channel regulator activity"/>
    <property type="evidence" value="ECO:0007669"/>
    <property type="project" value="UniProtKB-KW"/>
</dbReference>
<dbReference type="GO" id="GO:0090729">
    <property type="term" value="F:toxin activity"/>
    <property type="evidence" value="ECO:0007669"/>
    <property type="project" value="UniProtKB-KW"/>
</dbReference>
<dbReference type="CDD" id="cd00206">
    <property type="entry name" value="TFP_snake_toxin"/>
    <property type="match status" value="1"/>
</dbReference>
<dbReference type="FunFam" id="2.10.60.10:FF:000024">
    <property type="entry name" value="Cytotoxin 1"/>
    <property type="match status" value="1"/>
</dbReference>
<dbReference type="Gene3D" id="2.10.60.10">
    <property type="entry name" value="CD59"/>
    <property type="match status" value="1"/>
</dbReference>
<dbReference type="InterPro" id="IPR003571">
    <property type="entry name" value="Snake_3FTx"/>
</dbReference>
<dbReference type="InterPro" id="IPR045860">
    <property type="entry name" value="Snake_toxin-like_sf"/>
</dbReference>
<dbReference type="InterPro" id="IPR018354">
    <property type="entry name" value="Snake_toxin_con_site"/>
</dbReference>
<dbReference type="InterPro" id="IPR054131">
    <property type="entry name" value="Toxin_cobra-type"/>
</dbReference>
<dbReference type="Pfam" id="PF21947">
    <property type="entry name" value="Toxin_cobra-type"/>
    <property type="match status" value="1"/>
</dbReference>
<dbReference type="SUPFAM" id="SSF57302">
    <property type="entry name" value="Snake toxin-like"/>
    <property type="match status" value="1"/>
</dbReference>
<dbReference type="PROSITE" id="PS00272">
    <property type="entry name" value="SNAKE_TOXIN"/>
    <property type="match status" value="1"/>
</dbReference>
<proteinExistence type="evidence at protein level"/>
<reference key="1">
    <citation type="journal article" date="1996" name="Biochemistry">
        <title>Two novel alpha-neurotoxins isolated from the taipan snake, Oxyuranus scutellatus, exhibit reduced affinity for nicotinic acetylcholine receptors in brain and skeletal muscle.</title>
        <authorList>
            <person name="Zamudio F."/>
            <person name="Wolf K.M."/>
            <person name="Martin B.M."/>
            <person name="Possani L.D."/>
            <person name="Chiappinelli V.A."/>
        </authorList>
    </citation>
    <scope>PROTEIN SEQUENCE</scope>
    <scope>FUNCTION</scope>
    <scope>MASS SPECTROMETRY</scope>
    <scope>TOXIC DOSE</scope>
    <scope>SUBCELLULAR LOCATION</scope>
    <source>
        <tissue>Venom</tissue>
    </source>
</reference>
<name>3S12_OXYSC</name>
<accession>P0CB06</accession>
<feature type="chain" id="PRO_0000380613" description="Short neurotoxin 2" evidence="3">
    <location>
        <begin position="1"/>
        <end position="62"/>
    </location>
</feature>
<feature type="region of interest" description="Disordered" evidence="2">
    <location>
        <begin position="1"/>
        <end position="20"/>
    </location>
</feature>
<feature type="disulfide bond" evidence="1">
    <location>
        <begin position="3"/>
        <end position="24"/>
    </location>
</feature>
<feature type="disulfide bond" evidence="1">
    <location>
        <begin position="17"/>
        <end position="41"/>
    </location>
</feature>
<feature type="disulfide bond" evidence="1">
    <location>
        <begin position="43"/>
        <end position="54"/>
    </location>
</feature>
<feature type="disulfide bond" evidence="1">
    <location>
        <begin position="55"/>
        <end position="60"/>
    </location>
</feature>
<evidence type="ECO:0000250" key="1">
    <source>
        <dbReference type="UniProtKB" id="P0C1Z0"/>
    </source>
</evidence>
<evidence type="ECO:0000256" key="2">
    <source>
        <dbReference type="SAM" id="MobiDB-lite"/>
    </source>
</evidence>
<evidence type="ECO:0000269" key="3">
    <source>
    </source>
</evidence>
<evidence type="ECO:0000305" key="4"/>
<protein>
    <recommendedName>
        <fullName>Short neurotoxin 2</fullName>
        <shortName>SNTX-2</shortName>
    </recommendedName>
</protein>
<sequence length="62" mass="6790">MTCYNQQSSEAKTTTTCSGGVSSCYKKTWSDIRGTIIERGCGCPSVKKGIERICCRTDKCNN</sequence>